<gene>
    <name evidence="1" type="primary">add</name>
    <name type="ordered locus">Sez_0749</name>
</gene>
<comment type="function">
    <text evidence="1">Catalyzes the hydrolytic deamination of adenosine and 2-deoxyadenosine.</text>
</comment>
<comment type="catalytic activity">
    <reaction evidence="1">
        <text>adenosine + H2O + H(+) = inosine + NH4(+)</text>
        <dbReference type="Rhea" id="RHEA:24408"/>
        <dbReference type="ChEBI" id="CHEBI:15377"/>
        <dbReference type="ChEBI" id="CHEBI:15378"/>
        <dbReference type="ChEBI" id="CHEBI:16335"/>
        <dbReference type="ChEBI" id="CHEBI:17596"/>
        <dbReference type="ChEBI" id="CHEBI:28938"/>
        <dbReference type="EC" id="3.5.4.4"/>
    </reaction>
    <physiologicalReaction direction="left-to-right" evidence="1">
        <dbReference type="Rhea" id="RHEA:24409"/>
    </physiologicalReaction>
</comment>
<comment type="catalytic activity">
    <reaction evidence="1">
        <text>2'-deoxyadenosine + H2O + H(+) = 2'-deoxyinosine + NH4(+)</text>
        <dbReference type="Rhea" id="RHEA:28190"/>
        <dbReference type="ChEBI" id="CHEBI:15377"/>
        <dbReference type="ChEBI" id="CHEBI:15378"/>
        <dbReference type="ChEBI" id="CHEBI:17256"/>
        <dbReference type="ChEBI" id="CHEBI:28938"/>
        <dbReference type="ChEBI" id="CHEBI:28997"/>
        <dbReference type="EC" id="3.5.4.4"/>
    </reaction>
    <physiologicalReaction direction="left-to-right" evidence="1">
        <dbReference type="Rhea" id="RHEA:28191"/>
    </physiologicalReaction>
</comment>
<comment type="cofactor">
    <cofactor evidence="1">
        <name>Zn(2+)</name>
        <dbReference type="ChEBI" id="CHEBI:29105"/>
    </cofactor>
    <text evidence="1">Binds 1 zinc ion per subunit.</text>
</comment>
<comment type="similarity">
    <text evidence="1">Belongs to the metallo-dependent hydrolases superfamily. Adenosine and AMP deaminases family. Adenosine deaminase subfamily.</text>
</comment>
<sequence length="341" mass="37748">METKDLKKLAKAELHCHLDGSLSLDTIRQLAALAQVDVPQDDSELKQLVTAPETCGSLMDYLKTFDFIRPLLQTPQALTLAAYDVVKQAALENVIYIEIRFAPELSMDQGLTATQVVEAVLKGLEQGQKEFGIVAKAIVCGMRQSSLDISREIFANVLEWANKGLVGFDFAGNELDFPPAVLADLIKETQAYGLPFTLHAGECGCPNYIVDAIDLGIKRLGHVTAIHNQKDLLAKFIANDVTAELCFTSNLQTKAARTVEDFPYMQLRQAGAKLSINTDNRTVSDTNLTKEYELFVKHFETSVSDFLEHNRDAIKASFTSPAEKEALLARLDKAYQSYIKK</sequence>
<evidence type="ECO:0000255" key="1">
    <source>
        <dbReference type="HAMAP-Rule" id="MF_00540"/>
    </source>
</evidence>
<keyword id="KW-0378">Hydrolase</keyword>
<keyword id="KW-0479">Metal-binding</keyword>
<keyword id="KW-0546">Nucleotide metabolism</keyword>
<keyword id="KW-0862">Zinc</keyword>
<protein>
    <recommendedName>
        <fullName evidence="1">Adenosine deaminase</fullName>
        <ecNumber evidence="1">3.5.4.4</ecNumber>
    </recommendedName>
    <alternativeName>
        <fullName evidence="1">Adenosine aminohydrolase</fullName>
    </alternativeName>
</protein>
<reference key="1">
    <citation type="journal article" date="2008" name="PLoS ONE">
        <title>Genome sequence of a lancefield group C Streptococcus zooepidemicus strain causing epidemic nephritis: new information about an old disease.</title>
        <authorList>
            <person name="Beres S.B."/>
            <person name="Sesso R."/>
            <person name="Pinto S.W.L."/>
            <person name="Hoe N.P."/>
            <person name="Porcella S.F."/>
            <person name="Deleo F.R."/>
            <person name="Musser J.M."/>
        </authorList>
    </citation>
    <scope>NUCLEOTIDE SEQUENCE [LARGE SCALE GENOMIC DNA]</scope>
    <source>
        <strain>MGCS10565</strain>
    </source>
</reference>
<organism>
    <name type="scientific">Streptococcus equi subsp. zooepidemicus (strain MGCS10565)</name>
    <dbReference type="NCBI Taxonomy" id="552526"/>
    <lineage>
        <taxon>Bacteria</taxon>
        <taxon>Bacillati</taxon>
        <taxon>Bacillota</taxon>
        <taxon>Bacilli</taxon>
        <taxon>Lactobacillales</taxon>
        <taxon>Streptococcaceae</taxon>
        <taxon>Streptococcus</taxon>
    </lineage>
</organism>
<dbReference type="EC" id="3.5.4.4" evidence="1"/>
<dbReference type="EMBL" id="CP001129">
    <property type="protein sequence ID" value="ACG62112.1"/>
    <property type="molecule type" value="Genomic_DNA"/>
</dbReference>
<dbReference type="RefSeq" id="WP_012515386.1">
    <property type="nucleotide sequence ID" value="NC_011134.1"/>
</dbReference>
<dbReference type="SMR" id="B4U295"/>
<dbReference type="KEGG" id="sez:Sez_0749"/>
<dbReference type="HOGENOM" id="CLU_039228_0_0_9"/>
<dbReference type="Proteomes" id="UP000001873">
    <property type="component" value="Chromosome"/>
</dbReference>
<dbReference type="GO" id="GO:0005829">
    <property type="term" value="C:cytosol"/>
    <property type="evidence" value="ECO:0007669"/>
    <property type="project" value="TreeGrafter"/>
</dbReference>
<dbReference type="GO" id="GO:0046936">
    <property type="term" value="F:2'-deoxyadenosine deaminase activity"/>
    <property type="evidence" value="ECO:0007669"/>
    <property type="project" value="RHEA"/>
</dbReference>
<dbReference type="GO" id="GO:0004000">
    <property type="term" value="F:adenosine deaminase activity"/>
    <property type="evidence" value="ECO:0007669"/>
    <property type="project" value="UniProtKB-UniRule"/>
</dbReference>
<dbReference type="GO" id="GO:0008270">
    <property type="term" value="F:zinc ion binding"/>
    <property type="evidence" value="ECO:0007669"/>
    <property type="project" value="UniProtKB-UniRule"/>
</dbReference>
<dbReference type="GO" id="GO:0006154">
    <property type="term" value="P:adenosine catabolic process"/>
    <property type="evidence" value="ECO:0007669"/>
    <property type="project" value="TreeGrafter"/>
</dbReference>
<dbReference type="GO" id="GO:0043103">
    <property type="term" value="P:hypoxanthine salvage"/>
    <property type="evidence" value="ECO:0007669"/>
    <property type="project" value="TreeGrafter"/>
</dbReference>
<dbReference type="GO" id="GO:0046103">
    <property type="term" value="P:inosine biosynthetic process"/>
    <property type="evidence" value="ECO:0007669"/>
    <property type="project" value="TreeGrafter"/>
</dbReference>
<dbReference type="GO" id="GO:0009117">
    <property type="term" value="P:nucleotide metabolic process"/>
    <property type="evidence" value="ECO:0007669"/>
    <property type="project" value="UniProtKB-KW"/>
</dbReference>
<dbReference type="GO" id="GO:0009168">
    <property type="term" value="P:purine ribonucleoside monophosphate biosynthetic process"/>
    <property type="evidence" value="ECO:0007669"/>
    <property type="project" value="UniProtKB-UniRule"/>
</dbReference>
<dbReference type="CDD" id="cd01320">
    <property type="entry name" value="ADA"/>
    <property type="match status" value="1"/>
</dbReference>
<dbReference type="Gene3D" id="3.20.20.140">
    <property type="entry name" value="Metal-dependent hydrolases"/>
    <property type="match status" value="1"/>
</dbReference>
<dbReference type="HAMAP" id="MF_00540">
    <property type="entry name" value="A_deaminase"/>
    <property type="match status" value="1"/>
</dbReference>
<dbReference type="InterPro" id="IPR028893">
    <property type="entry name" value="A_deaminase"/>
</dbReference>
<dbReference type="InterPro" id="IPR001365">
    <property type="entry name" value="A_deaminase_dom"/>
</dbReference>
<dbReference type="InterPro" id="IPR006330">
    <property type="entry name" value="Ado/ade_deaminase"/>
</dbReference>
<dbReference type="InterPro" id="IPR032466">
    <property type="entry name" value="Metal_Hydrolase"/>
</dbReference>
<dbReference type="NCBIfam" id="TIGR01430">
    <property type="entry name" value="aden_deam"/>
    <property type="match status" value="1"/>
</dbReference>
<dbReference type="PANTHER" id="PTHR11409">
    <property type="entry name" value="ADENOSINE DEAMINASE"/>
    <property type="match status" value="1"/>
</dbReference>
<dbReference type="PANTHER" id="PTHR11409:SF43">
    <property type="entry name" value="ADENOSINE DEAMINASE"/>
    <property type="match status" value="1"/>
</dbReference>
<dbReference type="Pfam" id="PF00962">
    <property type="entry name" value="A_deaminase"/>
    <property type="match status" value="1"/>
</dbReference>
<dbReference type="SUPFAM" id="SSF51556">
    <property type="entry name" value="Metallo-dependent hydrolases"/>
    <property type="match status" value="1"/>
</dbReference>
<name>ADD_STREM</name>
<feature type="chain" id="PRO_1000128870" description="Adenosine deaminase">
    <location>
        <begin position="1"/>
        <end position="341"/>
    </location>
</feature>
<feature type="active site" description="Proton donor" evidence="1">
    <location>
        <position position="202"/>
    </location>
</feature>
<feature type="binding site" evidence="1">
    <location>
        <position position="15"/>
    </location>
    <ligand>
        <name>Zn(2+)</name>
        <dbReference type="ChEBI" id="CHEBI:29105"/>
        <note>catalytic</note>
    </ligand>
</feature>
<feature type="binding site" evidence="1">
    <location>
        <position position="17"/>
    </location>
    <ligand>
        <name>substrate</name>
    </ligand>
</feature>
<feature type="binding site" evidence="1">
    <location>
        <position position="17"/>
    </location>
    <ligand>
        <name>Zn(2+)</name>
        <dbReference type="ChEBI" id="CHEBI:29105"/>
        <note>catalytic</note>
    </ligand>
</feature>
<feature type="binding site" evidence="1">
    <location>
        <position position="19"/>
    </location>
    <ligand>
        <name>substrate</name>
    </ligand>
</feature>
<feature type="binding site" evidence="1">
    <location>
        <position position="172"/>
    </location>
    <ligand>
        <name>substrate</name>
    </ligand>
</feature>
<feature type="binding site" evidence="1">
    <location>
        <position position="199"/>
    </location>
    <ligand>
        <name>Zn(2+)</name>
        <dbReference type="ChEBI" id="CHEBI:29105"/>
        <note>catalytic</note>
    </ligand>
</feature>
<feature type="binding site" evidence="1">
    <location>
        <position position="279"/>
    </location>
    <ligand>
        <name>Zn(2+)</name>
        <dbReference type="ChEBI" id="CHEBI:29105"/>
        <note>catalytic</note>
    </ligand>
</feature>
<feature type="site" description="Important for catalytic activity" evidence="1">
    <location>
        <position position="222"/>
    </location>
</feature>
<proteinExistence type="inferred from homology"/>
<accession>B4U295</accession>